<proteinExistence type="inferred from homology"/>
<gene>
    <name type="ordered locus">BLi02810</name>
    <name type="ordered locus">BL02042</name>
</gene>
<protein>
    <recommendedName>
        <fullName evidence="1">Ferredoxin--NADP reductase 1</fullName>
        <shortName evidence="1">FNR 1</shortName>
        <shortName evidence="1">Fd-NADP(+) reductase 1</shortName>
        <ecNumber evidence="1">1.18.1.2</ecNumber>
    </recommendedName>
</protein>
<comment type="catalytic activity">
    <reaction evidence="1">
        <text>2 reduced [2Fe-2S]-[ferredoxin] + NADP(+) + H(+) = 2 oxidized [2Fe-2S]-[ferredoxin] + NADPH</text>
        <dbReference type="Rhea" id="RHEA:20125"/>
        <dbReference type="Rhea" id="RHEA-COMP:10000"/>
        <dbReference type="Rhea" id="RHEA-COMP:10001"/>
        <dbReference type="ChEBI" id="CHEBI:15378"/>
        <dbReference type="ChEBI" id="CHEBI:33737"/>
        <dbReference type="ChEBI" id="CHEBI:33738"/>
        <dbReference type="ChEBI" id="CHEBI:57783"/>
        <dbReference type="ChEBI" id="CHEBI:58349"/>
        <dbReference type="EC" id="1.18.1.2"/>
    </reaction>
</comment>
<comment type="cofactor">
    <cofactor evidence="1">
        <name>FAD</name>
        <dbReference type="ChEBI" id="CHEBI:57692"/>
    </cofactor>
    <text evidence="1">Binds 1 FAD per subunit.</text>
</comment>
<comment type="subunit">
    <text evidence="1">Homodimer.</text>
</comment>
<comment type="similarity">
    <text evidence="1">Belongs to the ferredoxin--NADP reductase type 2 family.</text>
</comment>
<dbReference type="EC" id="1.18.1.2" evidence="1"/>
<dbReference type="EMBL" id="CP000002">
    <property type="protein sequence ID" value="AAU24315.1"/>
    <property type="molecule type" value="Genomic_DNA"/>
</dbReference>
<dbReference type="EMBL" id="AE017333">
    <property type="protein sequence ID" value="AAU41681.1"/>
    <property type="molecule type" value="Genomic_DNA"/>
</dbReference>
<dbReference type="RefSeq" id="WP_003183797.1">
    <property type="nucleotide sequence ID" value="NC_006322.1"/>
</dbReference>
<dbReference type="SMR" id="Q65GY3"/>
<dbReference type="STRING" id="279010.BL02042"/>
<dbReference type="KEGG" id="bld:BLi02810"/>
<dbReference type="KEGG" id="bli:BL02042"/>
<dbReference type="eggNOG" id="COG0492">
    <property type="taxonomic scope" value="Bacteria"/>
</dbReference>
<dbReference type="HOGENOM" id="CLU_031864_5_5_9"/>
<dbReference type="Proteomes" id="UP000000606">
    <property type="component" value="Chromosome"/>
</dbReference>
<dbReference type="GO" id="GO:0004324">
    <property type="term" value="F:ferredoxin-NADP+ reductase activity"/>
    <property type="evidence" value="ECO:0007669"/>
    <property type="project" value="UniProtKB-UniRule"/>
</dbReference>
<dbReference type="GO" id="GO:0050660">
    <property type="term" value="F:flavin adenine dinucleotide binding"/>
    <property type="evidence" value="ECO:0007669"/>
    <property type="project" value="UniProtKB-UniRule"/>
</dbReference>
<dbReference type="GO" id="GO:0050661">
    <property type="term" value="F:NADP binding"/>
    <property type="evidence" value="ECO:0007669"/>
    <property type="project" value="UniProtKB-UniRule"/>
</dbReference>
<dbReference type="Gene3D" id="3.50.50.60">
    <property type="entry name" value="FAD/NAD(P)-binding domain"/>
    <property type="match status" value="2"/>
</dbReference>
<dbReference type="HAMAP" id="MF_01685">
    <property type="entry name" value="FENR2"/>
    <property type="match status" value="1"/>
</dbReference>
<dbReference type="InterPro" id="IPR036188">
    <property type="entry name" value="FAD/NAD-bd_sf"/>
</dbReference>
<dbReference type="InterPro" id="IPR023753">
    <property type="entry name" value="FAD/NAD-binding_dom"/>
</dbReference>
<dbReference type="InterPro" id="IPR022890">
    <property type="entry name" value="Fd--NADP_Rdtase_type_2"/>
</dbReference>
<dbReference type="InterPro" id="IPR050097">
    <property type="entry name" value="Ferredoxin-NADP_redctase_2"/>
</dbReference>
<dbReference type="PANTHER" id="PTHR48105">
    <property type="entry name" value="THIOREDOXIN REDUCTASE 1-RELATED-RELATED"/>
    <property type="match status" value="1"/>
</dbReference>
<dbReference type="Pfam" id="PF07992">
    <property type="entry name" value="Pyr_redox_2"/>
    <property type="match status" value="1"/>
</dbReference>
<dbReference type="PRINTS" id="PR00368">
    <property type="entry name" value="FADPNR"/>
</dbReference>
<dbReference type="PRINTS" id="PR00469">
    <property type="entry name" value="PNDRDTASEII"/>
</dbReference>
<dbReference type="SUPFAM" id="SSF51905">
    <property type="entry name" value="FAD/NAD(P)-binding domain"/>
    <property type="match status" value="1"/>
</dbReference>
<name>FENR1_BACLD</name>
<accession>Q65GY3</accession>
<accession>Q62SE4</accession>
<reference key="1">
    <citation type="journal article" date="2004" name="J. Mol. Microbiol. Biotechnol.">
        <title>The complete genome sequence of Bacillus licheniformis DSM13, an organism with great industrial potential.</title>
        <authorList>
            <person name="Veith B."/>
            <person name="Herzberg C."/>
            <person name="Steckel S."/>
            <person name="Feesche J."/>
            <person name="Maurer K.H."/>
            <person name="Ehrenreich P."/>
            <person name="Baeumer S."/>
            <person name="Henne A."/>
            <person name="Liesegang H."/>
            <person name="Merkl R."/>
            <person name="Ehrenreich A."/>
            <person name="Gottschalk G."/>
        </authorList>
    </citation>
    <scope>NUCLEOTIDE SEQUENCE [LARGE SCALE GENOMIC DNA]</scope>
    <source>
        <strain>ATCC 14580 / DSM 13 / JCM 2505 / CCUG 7422 / NBRC 12200 / NCIMB 9375 / NCTC 10341 / NRRL NRS-1264 / Gibson 46</strain>
    </source>
</reference>
<reference key="2">
    <citation type="journal article" date="2004" name="Genome Biol.">
        <title>Complete genome sequence of the industrial bacterium Bacillus licheniformis and comparisons with closely related Bacillus species.</title>
        <authorList>
            <person name="Rey M.W."/>
            <person name="Ramaiya P."/>
            <person name="Nelson B.A."/>
            <person name="Brody-Karpin S.D."/>
            <person name="Zaretsky E.J."/>
            <person name="Tang M."/>
            <person name="Lopez de Leon A."/>
            <person name="Xiang H."/>
            <person name="Gusti V."/>
            <person name="Clausen I.G."/>
            <person name="Olsen P.B."/>
            <person name="Rasmussen M.D."/>
            <person name="Andersen J.T."/>
            <person name="Joergensen P.L."/>
            <person name="Larsen T.S."/>
            <person name="Sorokin A."/>
            <person name="Bolotin A."/>
            <person name="Lapidus A."/>
            <person name="Galleron N."/>
            <person name="Ehrlich S.D."/>
            <person name="Berka R.M."/>
        </authorList>
    </citation>
    <scope>NUCLEOTIDE SEQUENCE [LARGE SCALE GENOMIC DNA]</scope>
    <source>
        <strain>ATCC 14580 / DSM 13 / JCM 2505 / CCUG 7422 / NBRC 12200 / NCIMB 9375 / NCTC 10341 / NRRL NRS-1264 / Gibson 46</strain>
    </source>
</reference>
<sequence>MSRNELFDVTVIGGGPAGLYSAFYSGLRGMKAKIIEYQPMLGGKVHVYPEKMIWDVGGLTPISGAKLIEQLVQQGLTFHPEVLLNEKVESIARNEEGLFELHTAASGVHLSKTVIVAVGGGILNPQKLQIEGAERFEVSNLNYTVKSLQHFKDKTVIVSGGGNSAVDWANELEPVAKKVYLAYRKDALSGHEAQVDQLLNSSVSCFFHTEITKLIASEDHEVIERVELTNAQTGEVMELPVDEVVINHGYERDTSLLENSRLDVTRVDDYYIAGTSNCQSSVPGLYAAGDIVHYEGKLHLIAGAFQDAANAVNSAKRFIDPEAHKSAMVSSHNEVFKERNRELVKKMFV</sequence>
<feature type="chain" id="PRO_0000364797" description="Ferredoxin--NADP reductase 1">
    <location>
        <begin position="1"/>
        <end position="349"/>
    </location>
</feature>
<feature type="binding site" evidence="1">
    <location>
        <position position="36"/>
    </location>
    <ligand>
        <name>FAD</name>
        <dbReference type="ChEBI" id="CHEBI:57692"/>
    </ligand>
</feature>
<feature type="binding site" evidence="1">
    <location>
        <position position="44"/>
    </location>
    <ligand>
        <name>FAD</name>
        <dbReference type="ChEBI" id="CHEBI:57692"/>
    </ligand>
</feature>
<feature type="binding site" evidence="1">
    <location>
        <position position="48"/>
    </location>
    <ligand>
        <name>FAD</name>
        <dbReference type="ChEBI" id="CHEBI:57692"/>
    </ligand>
</feature>
<feature type="binding site" evidence="1">
    <location>
        <position position="88"/>
    </location>
    <ligand>
        <name>FAD</name>
        <dbReference type="ChEBI" id="CHEBI:57692"/>
    </ligand>
</feature>
<feature type="binding site" evidence="1">
    <location>
        <position position="123"/>
    </location>
    <ligand>
        <name>FAD</name>
        <dbReference type="ChEBI" id="CHEBI:57692"/>
    </ligand>
</feature>
<feature type="binding site" evidence="1">
    <location>
        <position position="290"/>
    </location>
    <ligand>
        <name>FAD</name>
        <dbReference type="ChEBI" id="CHEBI:57692"/>
    </ligand>
</feature>
<feature type="binding site" evidence="1">
    <location>
        <position position="331"/>
    </location>
    <ligand>
        <name>FAD</name>
        <dbReference type="ChEBI" id="CHEBI:57692"/>
    </ligand>
</feature>
<organism>
    <name type="scientific">Bacillus licheniformis (strain ATCC 14580 / DSM 13 / JCM 2505 / CCUG 7422 / NBRC 12200 / NCIMB 9375 / NCTC 10341 / NRRL NRS-1264 / Gibson 46)</name>
    <dbReference type="NCBI Taxonomy" id="279010"/>
    <lineage>
        <taxon>Bacteria</taxon>
        <taxon>Bacillati</taxon>
        <taxon>Bacillota</taxon>
        <taxon>Bacilli</taxon>
        <taxon>Bacillales</taxon>
        <taxon>Bacillaceae</taxon>
        <taxon>Bacillus</taxon>
    </lineage>
</organism>
<keyword id="KW-0274">FAD</keyword>
<keyword id="KW-0285">Flavoprotein</keyword>
<keyword id="KW-0521">NADP</keyword>
<keyword id="KW-0560">Oxidoreductase</keyword>
<keyword id="KW-1185">Reference proteome</keyword>
<evidence type="ECO:0000255" key="1">
    <source>
        <dbReference type="HAMAP-Rule" id="MF_01685"/>
    </source>
</evidence>